<feature type="chain" id="PRO_1000213976" description="Protein archease">
    <location>
        <begin position="1"/>
        <end position="139"/>
    </location>
</feature>
<feature type="binding site" evidence="1">
    <location>
        <position position="12"/>
    </location>
    <ligand>
        <name>Ca(2+)</name>
        <dbReference type="ChEBI" id="CHEBI:29108"/>
    </ligand>
</feature>
<feature type="binding site" evidence="1">
    <location>
        <position position="138"/>
    </location>
    <ligand>
        <name>Ca(2+)</name>
        <dbReference type="ChEBI" id="CHEBI:29108"/>
    </ligand>
</feature>
<feature type="binding site" evidence="1">
    <location>
        <position position="139"/>
    </location>
    <ligand>
        <name>Ca(2+)</name>
        <dbReference type="ChEBI" id="CHEBI:29108"/>
    </ligand>
</feature>
<reference key="1">
    <citation type="journal article" date="2009" name="Proc. Natl. Acad. Sci. U.S.A.">
        <title>Biogeography of the Sulfolobus islandicus pan-genome.</title>
        <authorList>
            <person name="Reno M.L."/>
            <person name="Held N.L."/>
            <person name="Fields C.J."/>
            <person name="Burke P.V."/>
            <person name="Whitaker R.J."/>
        </authorList>
    </citation>
    <scope>NUCLEOTIDE SEQUENCE [LARGE SCALE GENOMIC DNA]</scope>
    <source>
        <strain>Y.G.57.14 / Yellowstone #1</strain>
    </source>
</reference>
<gene>
    <name type="ordered locus">YG5714_1445</name>
</gene>
<evidence type="ECO:0000250" key="1"/>
<evidence type="ECO:0000255" key="2">
    <source>
        <dbReference type="HAMAP-Rule" id="MF_01222"/>
    </source>
</evidence>
<proteinExistence type="inferred from homology"/>
<keyword id="KW-0106">Calcium</keyword>
<keyword id="KW-0479">Metal-binding</keyword>
<keyword id="KW-0819">tRNA processing</keyword>
<protein>
    <recommendedName>
        <fullName evidence="2">Protein archease</fullName>
    </recommendedName>
</protein>
<accession>C3NEH3</accession>
<dbReference type="EMBL" id="CP001403">
    <property type="protein sequence ID" value="ACP45712.1"/>
    <property type="molecule type" value="Genomic_DNA"/>
</dbReference>
<dbReference type="RefSeq" id="WP_012716184.1">
    <property type="nucleotide sequence ID" value="NC_012622.1"/>
</dbReference>
<dbReference type="SMR" id="C3NEH3"/>
<dbReference type="GeneID" id="7806032"/>
<dbReference type="KEGG" id="siy:YG5714_1445"/>
<dbReference type="HOGENOM" id="CLU_111362_3_0_2"/>
<dbReference type="Proteomes" id="UP000002308">
    <property type="component" value="Chromosome"/>
</dbReference>
<dbReference type="GO" id="GO:0005509">
    <property type="term" value="F:calcium ion binding"/>
    <property type="evidence" value="ECO:0007669"/>
    <property type="project" value="UniProtKB-UniRule"/>
</dbReference>
<dbReference type="GO" id="GO:0006388">
    <property type="term" value="P:tRNA splicing, via endonucleolytic cleavage and ligation"/>
    <property type="evidence" value="ECO:0007669"/>
    <property type="project" value="UniProtKB-UniRule"/>
</dbReference>
<dbReference type="Gene3D" id="3.55.10.10">
    <property type="entry name" value="Archease domain"/>
    <property type="match status" value="1"/>
</dbReference>
<dbReference type="HAMAP" id="MF_01222">
    <property type="entry name" value="Archease_arch"/>
    <property type="match status" value="1"/>
</dbReference>
<dbReference type="InterPro" id="IPR002804">
    <property type="entry name" value="Archease"/>
</dbReference>
<dbReference type="InterPro" id="IPR022952">
    <property type="entry name" value="Archease_arc"/>
</dbReference>
<dbReference type="InterPro" id="IPR023572">
    <property type="entry name" value="Archease_dom"/>
</dbReference>
<dbReference type="InterPro" id="IPR036820">
    <property type="entry name" value="Archease_dom_sf"/>
</dbReference>
<dbReference type="NCBIfam" id="NF001617">
    <property type="entry name" value="PRK00407.1"/>
    <property type="match status" value="1"/>
</dbReference>
<dbReference type="PANTHER" id="PTHR12682">
    <property type="entry name" value="ARCHEASE"/>
    <property type="match status" value="1"/>
</dbReference>
<dbReference type="PANTHER" id="PTHR12682:SF11">
    <property type="entry name" value="PROTEIN ARCHEASE"/>
    <property type="match status" value="1"/>
</dbReference>
<dbReference type="Pfam" id="PF01951">
    <property type="entry name" value="Archease"/>
    <property type="match status" value="1"/>
</dbReference>
<dbReference type="SUPFAM" id="SSF69819">
    <property type="entry name" value="MTH1598-like"/>
    <property type="match status" value="1"/>
</dbReference>
<sequence length="139" mass="16402">MRSFEFFEHTADVGIRAYGKSLEEAFSNAALGVFEIITDTSKVKPIEYREIYLNGYDLENLLYKWIEELLYYYDSELMVFSKFDLMIDQDSMTLEGKAWGEKFNGKIHERRTVVKAMTYHQLSIEKTENCYLITFVVDI</sequence>
<name>ARCH_SACI7</name>
<organism>
    <name type="scientific">Saccharolobus islandicus (strain Y.G.57.14 / Yellowstone #1)</name>
    <name type="common">Sulfolobus islandicus</name>
    <dbReference type="NCBI Taxonomy" id="439386"/>
    <lineage>
        <taxon>Archaea</taxon>
        <taxon>Thermoproteota</taxon>
        <taxon>Thermoprotei</taxon>
        <taxon>Sulfolobales</taxon>
        <taxon>Sulfolobaceae</taxon>
        <taxon>Saccharolobus</taxon>
    </lineage>
</organism>
<comment type="function">
    <text evidence="1">Activates the tRNA-splicing ligase complex by facilitating the enzymatic turnover of catalytic subunit RtcB. Acts by promoting the guanylylation of RtcB, a key intermediate step in tRNA ligation. Can also alter the NTP specificity of RtcB such that ATP, dGTP or ITP is used efficiently (By similarity).</text>
</comment>
<comment type="similarity">
    <text evidence="2">Belongs to the archease family.</text>
</comment>